<feature type="chain" id="PRO_1000099076" description="Recombination-associated protein RdgC">
    <location>
        <begin position="1"/>
        <end position="302"/>
    </location>
</feature>
<gene>
    <name evidence="1" type="primary">rdgC</name>
    <name type="ordered locus">xcc-b100_4303</name>
</gene>
<sequence>MFFRNLTLFRFPTTLDFSEIETLLPQVQLKPVGPLEMSSRGFISPFGRDEQDVLSHRLEDFLWLTVGGEDKILPGAVVNDLLERKVAEIEEKEGRRPGGKARKRLKDDLIHELLPRAFVKSSRTDAILDLQHGYIAVNTSSRKSGENVMSEIRGALGSFPALPLNAEVAPRAILTGWIAGEPLPEGLSLGEECEMKDPIEGGAVVKCQHQELRGDEIDKHLEAGKQVTKLALVMDDNLSFVLGDDLVIRKLKFLDGALDQLEHSEGDGARAELDARFALMSAEVRRLFLLLEDALKLSKAEA</sequence>
<keyword id="KW-0963">Cytoplasm</keyword>
<keyword id="KW-0233">DNA recombination</keyword>
<proteinExistence type="inferred from homology"/>
<comment type="function">
    <text evidence="1">May be involved in recombination.</text>
</comment>
<comment type="subcellular location">
    <subcellularLocation>
        <location evidence="1">Cytoplasm</location>
        <location evidence="1">Nucleoid</location>
    </subcellularLocation>
</comment>
<comment type="similarity">
    <text evidence="1">Belongs to the RdgC family.</text>
</comment>
<protein>
    <recommendedName>
        <fullName evidence="1">Recombination-associated protein RdgC</fullName>
    </recommendedName>
</protein>
<name>RDGC_XANCB</name>
<dbReference type="EMBL" id="AM920689">
    <property type="protein sequence ID" value="CAP53673.1"/>
    <property type="molecule type" value="Genomic_DNA"/>
</dbReference>
<dbReference type="SMR" id="B0RYY7"/>
<dbReference type="KEGG" id="xca:xcc-b100_4303"/>
<dbReference type="HOGENOM" id="CLU_052038_1_1_6"/>
<dbReference type="Proteomes" id="UP000001188">
    <property type="component" value="Chromosome"/>
</dbReference>
<dbReference type="GO" id="GO:0043590">
    <property type="term" value="C:bacterial nucleoid"/>
    <property type="evidence" value="ECO:0007669"/>
    <property type="project" value="TreeGrafter"/>
</dbReference>
<dbReference type="GO" id="GO:0005737">
    <property type="term" value="C:cytoplasm"/>
    <property type="evidence" value="ECO:0007669"/>
    <property type="project" value="UniProtKB-UniRule"/>
</dbReference>
<dbReference type="GO" id="GO:0003690">
    <property type="term" value="F:double-stranded DNA binding"/>
    <property type="evidence" value="ECO:0007669"/>
    <property type="project" value="TreeGrafter"/>
</dbReference>
<dbReference type="GO" id="GO:0006310">
    <property type="term" value="P:DNA recombination"/>
    <property type="evidence" value="ECO:0007669"/>
    <property type="project" value="UniProtKB-UniRule"/>
</dbReference>
<dbReference type="GO" id="GO:0000018">
    <property type="term" value="P:regulation of DNA recombination"/>
    <property type="evidence" value="ECO:0007669"/>
    <property type="project" value="TreeGrafter"/>
</dbReference>
<dbReference type="HAMAP" id="MF_00194">
    <property type="entry name" value="RdgC"/>
    <property type="match status" value="1"/>
</dbReference>
<dbReference type="InterPro" id="IPR007476">
    <property type="entry name" value="RdgC"/>
</dbReference>
<dbReference type="NCBIfam" id="NF001464">
    <property type="entry name" value="PRK00321.1-5"/>
    <property type="match status" value="1"/>
</dbReference>
<dbReference type="NCBIfam" id="NF001465">
    <property type="entry name" value="PRK00321.1-6"/>
    <property type="match status" value="1"/>
</dbReference>
<dbReference type="PANTHER" id="PTHR38103">
    <property type="entry name" value="RECOMBINATION-ASSOCIATED PROTEIN RDGC"/>
    <property type="match status" value="1"/>
</dbReference>
<dbReference type="PANTHER" id="PTHR38103:SF1">
    <property type="entry name" value="RECOMBINATION-ASSOCIATED PROTEIN RDGC"/>
    <property type="match status" value="1"/>
</dbReference>
<dbReference type="Pfam" id="PF04381">
    <property type="entry name" value="RdgC"/>
    <property type="match status" value="1"/>
</dbReference>
<accession>B0RYY7</accession>
<reference key="1">
    <citation type="journal article" date="2008" name="J. Biotechnol.">
        <title>The genome of Xanthomonas campestris pv. campestris B100 and its use for the reconstruction of metabolic pathways involved in xanthan biosynthesis.</title>
        <authorList>
            <person name="Vorhoelter F.-J."/>
            <person name="Schneiker S."/>
            <person name="Goesmann A."/>
            <person name="Krause L."/>
            <person name="Bekel T."/>
            <person name="Kaiser O."/>
            <person name="Linke B."/>
            <person name="Patschkowski T."/>
            <person name="Rueckert C."/>
            <person name="Schmid J."/>
            <person name="Sidhu V.K."/>
            <person name="Sieber V."/>
            <person name="Tauch A."/>
            <person name="Watt S.A."/>
            <person name="Weisshaar B."/>
            <person name="Becker A."/>
            <person name="Niehaus K."/>
            <person name="Puehler A."/>
        </authorList>
    </citation>
    <scope>NUCLEOTIDE SEQUENCE [LARGE SCALE GENOMIC DNA]</scope>
    <source>
        <strain>B100</strain>
    </source>
</reference>
<organism>
    <name type="scientific">Xanthomonas campestris pv. campestris (strain B100)</name>
    <dbReference type="NCBI Taxonomy" id="509169"/>
    <lineage>
        <taxon>Bacteria</taxon>
        <taxon>Pseudomonadati</taxon>
        <taxon>Pseudomonadota</taxon>
        <taxon>Gammaproteobacteria</taxon>
        <taxon>Lysobacterales</taxon>
        <taxon>Lysobacteraceae</taxon>
        <taxon>Xanthomonas</taxon>
    </lineage>
</organism>
<evidence type="ECO:0000255" key="1">
    <source>
        <dbReference type="HAMAP-Rule" id="MF_00194"/>
    </source>
</evidence>